<evidence type="ECO:0000255" key="1">
    <source>
        <dbReference type="PROSITE-ProRule" id="PRU00041"/>
    </source>
</evidence>
<evidence type="ECO:0000255" key="2">
    <source>
        <dbReference type="PROSITE-ProRule" id="PRU00147"/>
    </source>
</evidence>
<evidence type="ECO:0000255" key="3">
    <source>
        <dbReference type="PROSITE-ProRule" id="PRU00269"/>
    </source>
</evidence>
<evidence type="ECO:0000255" key="4">
    <source>
        <dbReference type="PROSITE-ProRule" id="PRU00878"/>
    </source>
</evidence>
<evidence type="ECO:0000255" key="5">
    <source>
        <dbReference type="PROSITE-ProRule" id="PRU00879"/>
    </source>
</evidence>
<evidence type="ECO:0000255" key="6">
    <source>
        <dbReference type="PROSITE-ProRule" id="PRU00880"/>
    </source>
</evidence>
<evidence type="ECO:0000256" key="7">
    <source>
        <dbReference type="SAM" id="MobiDB-lite"/>
    </source>
</evidence>
<evidence type="ECO:0000269" key="8">
    <source>
    </source>
</evidence>
<evidence type="ECO:0000269" key="9">
    <source>
    </source>
</evidence>
<evidence type="ECO:0000305" key="10"/>
<evidence type="ECO:0000305" key="11">
    <source>
    </source>
</evidence>
<protein>
    <recommendedName>
        <fullName evidence="11">Phosphatidylinositol 3-kinase C2 domain-containing subunit gamma</fullName>
        <shortName>PI3K-C2-gamma</shortName>
        <shortName>PtdIns-3-kinase C2 subunit gamma</shortName>
        <ecNumber evidence="9">2.7.1.137</ecNumber>
        <ecNumber evidence="9">2.7.1.154</ecNumber>
    </recommendedName>
    <alternativeName>
        <fullName>Phosphoinositide 3-kinase-C2-gamma</fullName>
    </alternativeName>
</protein>
<reference key="1">
    <citation type="journal article" date="1998" name="Biochem. Biophys. Res. Commun.">
        <title>Cloning and characterization of a novel class II phosphoinositide 3-kinase containing C2 domain.</title>
        <authorList>
            <person name="Misawa H."/>
            <person name="Ohtsubo M."/>
            <person name="Copeland N.G."/>
            <person name="Gilbert D.J."/>
            <person name="Jenkins N.A."/>
            <person name="Yoshimura A."/>
        </authorList>
    </citation>
    <scope>NUCLEOTIDE SEQUENCE [MRNA]</scope>
    <scope>FUNCTION</scope>
    <scope>CATALYTIC ACTIVITY</scope>
    <scope>SUBCELLULAR LOCATION</scope>
    <scope>ALTERNATIVE SPLICING</scope>
    <scope>TISSUE SPECIFICITY</scope>
    <source>
        <tissue>Liver</tissue>
        <tissue>Lymphoid tissue</tissue>
    </source>
</reference>
<reference key="2">
    <citation type="journal article" date="2010" name="Leuk. Lymphoma">
        <title>Inhibition of class II phosphoinositide 3-kinase gamma expression by p185(Bcr-Abl) contributes to impaired chemotaxis and aberrant homing of leukemic cells.</title>
        <authorList>
            <person name="Yu W."/>
            <person name="Sun X."/>
            <person name="Tang H."/>
            <person name="Tao Y."/>
            <person name="Dai Z."/>
        </authorList>
    </citation>
    <scope>FUNCTION</scope>
    <scope>TISSUE SPECIFICITY</scope>
</reference>
<comment type="function">
    <text evidence="8 9">Generates phosphatidylinositol 3-phosphate (PtdIns3P) and phosphatidylinositol 3,4-bisphosphate (PtdIns(3,4)P2) that act as second messengers (PubMed:9514948). May play a role in SDF1A-stimulated chemotaxis.</text>
</comment>
<comment type="catalytic activity">
    <reaction evidence="9">
        <text>a 1,2-diacyl-sn-glycero-3-phospho-(1D-myo-inositol 4-phosphate) + ATP = a 1,2-diacyl-sn-glycero-3-phospho-(1D-myo-inositol-3,4-bisphosphate) + ADP + H(+)</text>
        <dbReference type="Rhea" id="RHEA:18373"/>
        <dbReference type="ChEBI" id="CHEBI:15378"/>
        <dbReference type="ChEBI" id="CHEBI:30616"/>
        <dbReference type="ChEBI" id="CHEBI:57658"/>
        <dbReference type="ChEBI" id="CHEBI:58178"/>
        <dbReference type="ChEBI" id="CHEBI:456216"/>
        <dbReference type="EC" id="2.7.1.154"/>
    </reaction>
    <physiologicalReaction direction="left-to-right" evidence="11">
        <dbReference type="Rhea" id="RHEA:18374"/>
    </physiologicalReaction>
</comment>
<comment type="catalytic activity">
    <reaction evidence="9">
        <text>a 1,2-diacyl-sn-glycero-3-phospho-(1D-myo-inositol) + ATP = a 1,2-diacyl-sn-glycero-3-phospho-(1D-myo-inositol-3-phosphate) + ADP + H(+)</text>
        <dbReference type="Rhea" id="RHEA:12709"/>
        <dbReference type="ChEBI" id="CHEBI:15378"/>
        <dbReference type="ChEBI" id="CHEBI:30616"/>
        <dbReference type="ChEBI" id="CHEBI:57880"/>
        <dbReference type="ChEBI" id="CHEBI:58088"/>
        <dbReference type="ChEBI" id="CHEBI:456216"/>
        <dbReference type="EC" id="2.7.1.137"/>
    </reaction>
    <physiologicalReaction direction="left-to-right" evidence="11">
        <dbReference type="Rhea" id="RHEA:12710"/>
    </physiologicalReaction>
</comment>
<comment type="subcellular location">
    <subcellularLocation>
        <location evidence="9">Membrane</location>
        <topology evidence="9">Peripheral membrane protein</topology>
    </subcellularLocation>
</comment>
<comment type="alternative products">
    <event type="alternative splicing"/>
    <isoform>
        <id>O70167-1</id>
        <name>1</name>
        <sequence type="displayed"/>
    </isoform>
    <isoform>
        <id>O70167-2</id>
        <name>2</name>
        <sequence type="described" ref="VSP_004706 VSP_004707"/>
    </isoform>
</comment>
<comment type="tissue specificity">
    <text evidence="8 9">Expressed predominantly in liver. Also found in kidney, lung and lymphoid tissue. Down-regulated in BeF3 cells expressing the BCR-ABL oncogene p185.</text>
</comment>
<comment type="similarity">
    <text evidence="5 6">Belongs to the PI3/PI4-kinase family.</text>
</comment>
<organism>
    <name type="scientific">Mus musculus</name>
    <name type="common">Mouse</name>
    <dbReference type="NCBI Taxonomy" id="10090"/>
    <lineage>
        <taxon>Eukaryota</taxon>
        <taxon>Metazoa</taxon>
        <taxon>Chordata</taxon>
        <taxon>Craniata</taxon>
        <taxon>Vertebrata</taxon>
        <taxon>Euteleostomi</taxon>
        <taxon>Mammalia</taxon>
        <taxon>Eutheria</taxon>
        <taxon>Euarchontoglires</taxon>
        <taxon>Glires</taxon>
        <taxon>Rodentia</taxon>
        <taxon>Myomorpha</taxon>
        <taxon>Muroidea</taxon>
        <taxon>Muridae</taxon>
        <taxon>Murinae</taxon>
        <taxon>Mus</taxon>
        <taxon>Mus</taxon>
    </lineage>
</organism>
<sequence length="1506" mass="171580">MAYSWQTEPNRTEPQEDGSDTQQFHHTNQHLSSRQVRLGFDQLVEEINNKTPLSESEKEEDTYFVPDAPNLGSKWPSIYETHPRYFSEFTSQSPDSSQLRFGKLSAIGFNPAVLPTHQLIHEGASWRNPSGKYHGIEYPRFDALPPSSTGQGECNPQGQSGTKHHNYCGEHEGNLPHHHSSYSIDSIPNREKRRSGDVNLVEPSLEFSKDSFLPRTSENVSVESTEPIGCPIEIVEVPQGSNKNLASFCNKVKKIRESYHASDINSNSGKIWAITTAYPSRLFADTKFRVKISIDNSAQLLLLMPHANYLVKDLIAEILLLCANEPLSPKEYLLSVCGSEEFLQMDHSLGSHKIFQKNKSVIQLHLQKNRDTPGKLSRKSEDDHSPFHLNQLLEFTHIWKISRQCLSTVMKKYNLHVEHLLKPQKDMEEKHLSSMVSGNQHTSQPHVNNVLEEVKNICSVLGCIETKQVSDAVKELNLILQRPSQNFHQNSETSKKGFIERVTAELSRSIYQLIDVYCSSFCTDFQPVHTPGGVSHVHAGLQSHLSFTVCSLHNVPETWAHSYKAFSFSCWLTYAGKKLCQVKSCRPLPVTKSFSLLVNWNEIINFPLEIKSLPRESMLVIKLFGIDSATHSTNLLAWTCLPLFPRQESVLGSRLFSVTLQSEPPIEMIAPGVWDGSQPSPLTLQIDFPDAGWEYLKPESEENRTDHEEPPRECLKHIAKLSQKKSPLLLSEEKRRYLWFYRLYCNNENSSLPLVLGSAPGWDEETVSEMHAILRRWTFSHPWEALGLLTSRFPDQDIREVAVQQLDTLLTDELLDCLPQLVQAVKFEWNLESPLVELLPRRPLQSIRVAHCLYWLLRDAQGEAYFKSWYQELLAALQFCAGEALNEELSKEQKLVKLLGDIGEKVKSASDPQRKDVLKKEIGSLEEFFKDIKTCHLPLNPALCIKGIDRDACSYFTSNASPLKITFINANPMGKNISVIFKAGDDLRQDMLALQIIQVMDNAWLQEGLDMQMITYGCLSTGRAQGFIEMVPDAVTLAKIHLHSGLIGPLKENTIKKWFSQHNHLKEDYEKALRNFFYSCAGWCVVTFILGVCDRHNDNIMLTKSGHMFHIDFGKFLGHAQTFGGIKRDRAPFIFTSEMEYFITEGGKNIQHFQDFVELCCRAYNIVRKHSQLILSLLEMMLHAGLPELRGIEDLKYVHNNLRPQDTDLEATSHFTKKIKESLECFPVKLNNLIHTLAQMPALSLAKPAPQTLLQESCILNKTRTIQRVTILGFSKTHSNLYLMEVTCSDNRRSLTKKSFEQFYRLHSQMQKQFSSLALPEFPHWWHLPFTDSDHKRIRDLSHYVEQVLRGSYEVANSDCVLSFFLSEHIQPTLEDSPFVDPGENSLDKSPKVQLLMTYEDSRLTILVKHLKNIHLPDGSVPSAHVEIYLLPHPSEVRRKKTKCVPKCTDPTYNEIVVYDEVLGLQGHVLMLIVKSKTVFVGAVNIQLCSVPLNEEKWYPLGNSII</sequence>
<feature type="chain" id="PRO_0000088800" description="Phosphatidylinositol 3-kinase C2 domain-containing subunit gamma">
    <location>
        <begin position="1"/>
        <end position="1506"/>
    </location>
</feature>
<feature type="domain" description="PI3K-RBD" evidence="5">
    <location>
        <begin position="285"/>
        <end position="371"/>
    </location>
</feature>
<feature type="domain" description="C2 PI3K-type" evidence="6">
    <location>
        <begin position="541"/>
        <end position="689"/>
    </location>
</feature>
<feature type="domain" description="PIK helical" evidence="4">
    <location>
        <begin position="704"/>
        <end position="880"/>
    </location>
</feature>
<feature type="domain" description="PI3K/PI4K catalytic" evidence="3">
    <location>
        <begin position="949"/>
        <end position="1227"/>
    </location>
</feature>
<feature type="domain" description="PX" evidence="2">
    <location>
        <begin position="1260"/>
        <end position="1372"/>
    </location>
</feature>
<feature type="domain" description="C2" evidence="1">
    <location>
        <begin position="1381"/>
        <end position="1506"/>
    </location>
</feature>
<feature type="region of interest" description="Disordered" evidence="7">
    <location>
        <begin position="1"/>
        <end position="34"/>
    </location>
</feature>
<feature type="region of interest" description="G-loop" evidence="3">
    <location>
        <begin position="955"/>
        <end position="961"/>
    </location>
</feature>
<feature type="region of interest" description="Catalytic loop" evidence="3">
    <location>
        <begin position="1091"/>
        <end position="1099"/>
    </location>
</feature>
<feature type="region of interest" description="Activation loop" evidence="3">
    <location>
        <begin position="1110"/>
        <end position="1136"/>
    </location>
</feature>
<feature type="compositionally biased region" description="Polar residues" evidence="7">
    <location>
        <begin position="20"/>
        <end position="34"/>
    </location>
</feature>
<feature type="splice variant" id="VSP_004706" description="In isoform 2." evidence="10">
    <location>
        <begin position="1"/>
        <end position="853"/>
    </location>
</feature>
<feature type="splice variant" id="VSP_004707" description="In isoform 2." evidence="10">
    <original>YW</original>
    <variation>MG</variation>
    <location>
        <begin position="854"/>
        <end position="855"/>
    </location>
</feature>
<accession>O70167</accession>
<accession>O70168</accession>
<name>P3C2G_MOUSE</name>
<dbReference type="EC" id="2.7.1.137" evidence="9"/>
<dbReference type="EC" id="2.7.1.154" evidence="9"/>
<dbReference type="EMBL" id="AB008791">
    <property type="protein sequence ID" value="BAA25427.1"/>
    <property type="molecule type" value="mRNA"/>
</dbReference>
<dbReference type="EMBL" id="AB008792">
    <property type="protein sequence ID" value="BAA25428.1"/>
    <property type="molecule type" value="mRNA"/>
</dbReference>
<dbReference type="PIR" id="JC5985">
    <property type="entry name" value="JC5985"/>
</dbReference>
<dbReference type="RefSeq" id="NP_997566.1">
    <property type="nucleotide sequence ID" value="NM_207683.2"/>
</dbReference>
<dbReference type="SMR" id="O70167"/>
<dbReference type="FunCoup" id="O70167">
    <property type="interactions" value="180"/>
</dbReference>
<dbReference type="STRING" id="10090.ENSMUSP00000107499"/>
<dbReference type="iPTMnet" id="O70167"/>
<dbReference type="PhosphoSitePlus" id="O70167"/>
<dbReference type="jPOST" id="O70167"/>
<dbReference type="PaxDb" id="10090-ENSMUSP00000107499"/>
<dbReference type="ProteomicsDB" id="294093">
    <molecule id="O70167-1"/>
</dbReference>
<dbReference type="ProteomicsDB" id="294094">
    <molecule id="O70167-2"/>
</dbReference>
<dbReference type="DNASU" id="18705"/>
<dbReference type="GeneID" id="18705"/>
<dbReference type="KEGG" id="mmu:18705"/>
<dbReference type="UCSC" id="uc029wch.1">
    <molecule id="O70167-1"/>
    <property type="organism name" value="mouse"/>
</dbReference>
<dbReference type="AGR" id="MGI:1203730"/>
<dbReference type="CTD" id="5288"/>
<dbReference type="MGI" id="MGI:1203730">
    <property type="gene designation" value="Pik3c2g"/>
</dbReference>
<dbReference type="eggNOG" id="KOG0905">
    <property type="taxonomic scope" value="Eukaryota"/>
</dbReference>
<dbReference type="InParanoid" id="O70167"/>
<dbReference type="PhylomeDB" id="O70167"/>
<dbReference type="BRENDA" id="2.7.1.137">
    <property type="organism ID" value="3474"/>
</dbReference>
<dbReference type="BRENDA" id="2.7.1.154">
    <property type="organism ID" value="3474"/>
</dbReference>
<dbReference type="Reactome" id="R-MMU-1660499">
    <property type="pathway name" value="Synthesis of PIPs at the plasma membrane"/>
</dbReference>
<dbReference type="Reactome" id="R-MMU-1660514">
    <property type="pathway name" value="Synthesis of PIPs at the Golgi membrane"/>
</dbReference>
<dbReference type="BioGRID-ORCS" id="18705">
    <property type="hits" value="0 hits in 71 CRISPR screens"/>
</dbReference>
<dbReference type="ChiTaRS" id="Pik3c2g">
    <property type="organism name" value="mouse"/>
</dbReference>
<dbReference type="PRO" id="PR:O70167"/>
<dbReference type="Proteomes" id="UP000000589">
    <property type="component" value="Unplaced"/>
</dbReference>
<dbReference type="RNAct" id="O70167">
    <property type="molecule type" value="protein"/>
</dbReference>
<dbReference type="GO" id="GO:0016020">
    <property type="term" value="C:membrane"/>
    <property type="evidence" value="ECO:0000314"/>
    <property type="project" value="UniProtKB"/>
</dbReference>
<dbReference type="GO" id="GO:0016303">
    <property type="term" value="F:1-phosphatidylinositol-3-kinase activity"/>
    <property type="evidence" value="ECO:0000314"/>
    <property type="project" value="UniProtKB"/>
</dbReference>
<dbReference type="GO" id="GO:0035005">
    <property type="term" value="F:1-phosphatidylinositol-4-phosphate 3-kinase activity"/>
    <property type="evidence" value="ECO:0000314"/>
    <property type="project" value="UniProtKB"/>
</dbReference>
<dbReference type="GO" id="GO:0005524">
    <property type="term" value="F:ATP binding"/>
    <property type="evidence" value="ECO:0007669"/>
    <property type="project" value="UniProtKB-KW"/>
</dbReference>
<dbReference type="GO" id="GO:0035091">
    <property type="term" value="F:phosphatidylinositol binding"/>
    <property type="evidence" value="ECO:0007669"/>
    <property type="project" value="InterPro"/>
</dbReference>
<dbReference type="GO" id="GO:0006935">
    <property type="term" value="P:chemotaxis"/>
    <property type="evidence" value="ECO:0000315"/>
    <property type="project" value="UniProtKB"/>
</dbReference>
<dbReference type="GO" id="GO:0036092">
    <property type="term" value="P:phosphatidylinositol-3-phosphate biosynthetic process"/>
    <property type="evidence" value="ECO:0000314"/>
    <property type="project" value="UniProtKB"/>
</dbReference>
<dbReference type="CDD" id="cd04012">
    <property type="entry name" value="C2A_PI3K_class_II"/>
    <property type="match status" value="1"/>
</dbReference>
<dbReference type="CDD" id="cd05177">
    <property type="entry name" value="PI3Kc_C2_gamma"/>
    <property type="match status" value="1"/>
</dbReference>
<dbReference type="CDD" id="cd06896">
    <property type="entry name" value="PX_PI3K_C2_gamma"/>
    <property type="match status" value="1"/>
</dbReference>
<dbReference type="FunFam" id="3.30.1010.10:FF:000001">
    <property type="entry name" value="Phosphatidylinositol 4-phosphate 3-kinase C2 domain-containing subunit beta"/>
    <property type="match status" value="1"/>
</dbReference>
<dbReference type="FunFam" id="1.10.1070.11:FF:000013">
    <property type="entry name" value="Phosphatidylinositol 4-phosphate 3-kinase C2 domain-containing subunit gamma"/>
    <property type="match status" value="1"/>
</dbReference>
<dbReference type="FunFam" id="1.25.40.70:FF:000010">
    <property type="entry name" value="Phosphatidylinositol 4-phosphate 3-kinase C2 domain-containing subunit gamma"/>
    <property type="match status" value="1"/>
</dbReference>
<dbReference type="FunFam" id="3.10.20.90:FF:000260">
    <property type="entry name" value="Phosphatidylinositol 4-phosphate 3-kinase C2 domain-containing subunit gamma"/>
    <property type="match status" value="1"/>
</dbReference>
<dbReference type="FunFam" id="3.30.1520.10:FF:000026">
    <property type="entry name" value="Phosphatidylinositol 4-phosphate 3-kinase C2 domain-containing subunit gamma"/>
    <property type="match status" value="1"/>
</dbReference>
<dbReference type="FunFam" id="2.60.40.150:FF:000160">
    <property type="entry name" value="phosphatidylinositol 4-phosphate 3-kinase C2 domain-containing subunit gamma isoform X1"/>
    <property type="match status" value="1"/>
</dbReference>
<dbReference type="FunFam" id="2.60.40.150:FF:000125">
    <property type="entry name" value="Phosphatidylinositol-4-phosphate 3-kinase catalytic subunit type 2 gamma"/>
    <property type="match status" value="1"/>
</dbReference>
<dbReference type="Gene3D" id="2.60.40.150">
    <property type="entry name" value="C2 domain"/>
    <property type="match status" value="2"/>
</dbReference>
<dbReference type="Gene3D" id="1.10.1070.11">
    <property type="entry name" value="Phosphatidylinositol 3-/4-kinase, catalytic domain"/>
    <property type="match status" value="1"/>
</dbReference>
<dbReference type="Gene3D" id="3.10.20.90">
    <property type="entry name" value="Phosphatidylinositol 3-kinase Catalytic Subunit, Chain A, domain 1"/>
    <property type="match status" value="1"/>
</dbReference>
<dbReference type="Gene3D" id="3.30.1010.10">
    <property type="entry name" value="Phosphatidylinositol 3-kinase Catalytic Subunit, Chain A, domain 4"/>
    <property type="match status" value="1"/>
</dbReference>
<dbReference type="Gene3D" id="1.25.40.70">
    <property type="entry name" value="Phosphatidylinositol 3-kinase, accessory domain (PIK)"/>
    <property type="match status" value="1"/>
</dbReference>
<dbReference type="Gene3D" id="3.30.1520.10">
    <property type="entry name" value="Phox-like domain"/>
    <property type="match status" value="1"/>
</dbReference>
<dbReference type="InterPro" id="IPR016024">
    <property type="entry name" value="ARM-type_fold"/>
</dbReference>
<dbReference type="InterPro" id="IPR000008">
    <property type="entry name" value="C2_dom"/>
</dbReference>
<dbReference type="InterPro" id="IPR035892">
    <property type="entry name" value="C2_domain_sf"/>
</dbReference>
<dbReference type="InterPro" id="IPR011009">
    <property type="entry name" value="Kinase-like_dom_sf"/>
</dbReference>
<dbReference type="InterPro" id="IPR000403">
    <property type="entry name" value="PI3/4_kinase_cat_dom"/>
</dbReference>
<dbReference type="InterPro" id="IPR036940">
    <property type="entry name" value="PI3/4_kinase_cat_sf"/>
</dbReference>
<dbReference type="InterPro" id="IPR018936">
    <property type="entry name" value="PI3/4_kinase_CS"/>
</dbReference>
<dbReference type="InterPro" id="IPR037707">
    <property type="entry name" value="PI3K-C2-gamma_dom"/>
</dbReference>
<dbReference type="InterPro" id="IPR002420">
    <property type="entry name" value="PI3K-type_C2_dom"/>
</dbReference>
<dbReference type="InterPro" id="IPR001263">
    <property type="entry name" value="PI3K_accessory_dom"/>
</dbReference>
<dbReference type="InterPro" id="IPR042236">
    <property type="entry name" value="PI3K_accessory_sf"/>
</dbReference>
<dbReference type="InterPro" id="IPR000341">
    <property type="entry name" value="PI3K_Ras-bd_dom"/>
</dbReference>
<dbReference type="InterPro" id="IPR015433">
    <property type="entry name" value="PI_Kinase"/>
</dbReference>
<dbReference type="InterPro" id="IPR001683">
    <property type="entry name" value="PX_dom"/>
</dbReference>
<dbReference type="InterPro" id="IPR036871">
    <property type="entry name" value="PX_dom_sf"/>
</dbReference>
<dbReference type="InterPro" id="IPR029071">
    <property type="entry name" value="Ubiquitin-like_domsf"/>
</dbReference>
<dbReference type="PANTHER" id="PTHR10048:SF29">
    <property type="entry name" value="PHOSPHATIDYLINOSITOL 3-KINASE C2 DOMAIN-CONTAINING SUBUNIT GAMMA"/>
    <property type="match status" value="1"/>
</dbReference>
<dbReference type="PANTHER" id="PTHR10048">
    <property type="entry name" value="PHOSPHATIDYLINOSITOL KINASE"/>
    <property type="match status" value="1"/>
</dbReference>
<dbReference type="Pfam" id="PF00168">
    <property type="entry name" value="C2"/>
    <property type="match status" value="1"/>
</dbReference>
<dbReference type="Pfam" id="PF00454">
    <property type="entry name" value="PI3_PI4_kinase"/>
    <property type="match status" value="1"/>
</dbReference>
<dbReference type="Pfam" id="PF00792">
    <property type="entry name" value="PI3K_C2"/>
    <property type="match status" value="1"/>
</dbReference>
<dbReference type="Pfam" id="PF00613">
    <property type="entry name" value="PI3Ka"/>
    <property type="match status" value="1"/>
</dbReference>
<dbReference type="Pfam" id="PF00787">
    <property type="entry name" value="PX"/>
    <property type="match status" value="1"/>
</dbReference>
<dbReference type="SMART" id="SM00239">
    <property type="entry name" value="C2"/>
    <property type="match status" value="1"/>
</dbReference>
<dbReference type="SMART" id="SM00142">
    <property type="entry name" value="PI3K_C2"/>
    <property type="match status" value="1"/>
</dbReference>
<dbReference type="SMART" id="SM00145">
    <property type="entry name" value="PI3Ka"/>
    <property type="match status" value="1"/>
</dbReference>
<dbReference type="SMART" id="SM00146">
    <property type="entry name" value="PI3Kc"/>
    <property type="match status" value="1"/>
</dbReference>
<dbReference type="SMART" id="SM00312">
    <property type="entry name" value="PX"/>
    <property type="match status" value="1"/>
</dbReference>
<dbReference type="SUPFAM" id="SSF48371">
    <property type="entry name" value="ARM repeat"/>
    <property type="match status" value="1"/>
</dbReference>
<dbReference type="SUPFAM" id="SSF49562">
    <property type="entry name" value="C2 domain (Calcium/lipid-binding domain, CaLB)"/>
    <property type="match status" value="2"/>
</dbReference>
<dbReference type="SUPFAM" id="SSF56112">
    <property type="entry name" value="Protein kinase-like (PK-like)"/>
    <property type="match status" value="1"/>
</dbReference>
<dbReference type="SUPFAM" id="SSF64268">
    <property type="entry name" value="PX domain"/>
    <property type="match status" value="1"/>
</dbReference>
<dbReference type="SUPFAM" id="SSF54236">
    <property type="entry name" value="Ubiquitin-like"/>
    <property type="match status" value="1"/>
</dbReference>
<dbReference type="PROSITE" id="PS50004">
    <property type="entry name" value="C2"/>
    <property type="match status" value="1"/>
</dbReference>
<dbReference type="PROSITE" id="PS51547">
    <property type="entry name" value="C2_PI3K"/>
    <property type="match status" value="1"/>
</dbReference>
<dbReference type="PROSITE" id="PS00915">
    <property type="entry name" value="PI3_4_KINASE_1"/>
    <property type="match status" value="1"/>
</dbReference>
<dbReference type="PROSITE" id="PS00916">
    <property type="entry name" value="PI3_4_KINASE_2"/>
    <property type="match status" value="1"/>
</dbReference>
<dbReference type="PROSITE" id="PS50290">
    <property type="entry name" value="PI3_4_KINASE_3"/>
    <property type="match status" value="1"/>
</dbReference>
<dbReference type="PROSITE" id="PS51546">
    <property type="entry name" value="PI3K_RBD"/>
    <property type="match status" value="1"/>
</dbReference>
<dbReference type="PROSITE" id="PS51545">
    <property type="entry name" value="PIK_HELICAL"/>
    <property type="match status" value="1"/>
</dbReference>
<dbReference type="PROSITE" id="PS50195">
    <property type="entry name" value="PX"/>
    <property type="match status" value="1"/>
</dbReference>
<keyword id="KW-0025">Alternative splicing</keyword>
<keyword id="KW-0067">ATP-binding</keyword>
<keyword id="KW-0145">Chemotaxis</keyword>
<keyword id="KW-0418">Kinase</keyword>
<keyword id="KW-0443">Lipid metabolism</keyword>
<keyword id="KW-0472">Membrane</keyword>
<keyword id="KW-0547">Nucleotide-binding</keyword>
<keyword id="KW-1185">Reference proteome</keyword>
<keyword id="KW-0808">Transferase</keyword>
<proteinExistence type="evidence at protein level"/>
<gene>
    <name type="primary">Pik3c2g</name>
</gene>